<comment type="function">
    <text evidence="1">Together with the chaperonin GroEL, plays an essential role in assisting protein folding. The GroEL-GroES system forms a nano-cage that allows encapsulation of the non-native substrate proteins and provides a physical environment optimized to promote and accelerate protein folding. GroES binds to the apical surface of the GroEL ring, thereby capping the opening of the GroEL channel.</text>
</comment>
<comment type="subunit">
    <text evidence="1">Heptamer of 7 subunits arranged in a ring. Interacts with the chaperonin GroEL.</text>
</comment>
<comment type="subcellular location">
    <subcellularLocation>
        <location evidence="1">Cytoplasm</location>
    </subcellularLocation>
</comment>
<comment type="similarity">
    <text evidence="1">Belongs to the GroES chaperonin family.</text>
</comment>
<dbReference type="EMBL" id="AM263198">
    <property type="protein sequence ID" value="CAK21508.1"/>
    <property type="molecule type" value="Genomic_DNA"/>
</dbReference>
<dbReference type="RefSeq" id="WP_011702849.1">
    <property type="nucleotide sequence ID" value="NC_008555.1"/>
</dbReference>
<dbReference type="SMR" id="A0AKH6"/>
<dbReference type="STRING" id="386043.lwe2090"/>
<dbReference type="GeneID" id="86845509"/>
<dbReference type="KEGG" id="lwe:lwe2090"/>
<dbReference type="eggNOG" id="COG0234">
    <property type="taxonomic scope" value="Bacteria"/>
</dbReference>
<dbReference type="HOGENOM" id="CLU_132825_2_0_9"/>
<dbReference type="OrthoDB" id="9806791at2"/>
<dbReference type="Proteomes" id="UP000000779">
    <property type="component" value="Chromosome"/>
</dbReference>
<dbReference type="GO" id="GO:0005737">
    <property type="term" value="C:cytoplasm"/>
    <property type="evidence" value="ECO:0007669"/>
    <property type="project" value="UniProtKB-SubCell"/>
</dbReference>
<dbReference type="GO" id="GO:0005524">
    <property type="term" value="F:ATP binding"/>
    <property type="evidence" value="ECO:0007669"/>
    <property type="project" value="InterPro"/>
</dbReference>
<dbReference type="GO" id="GO:0046872">
    <property type="term" value="F:metal ion binding"/>
    <property type="evidence" value="ECO:0007669"/>
    <property type="project" value="TreeGrafter"/>
</dbReference>
<dbReference type="GO" id="GO:0044183">
    <property type="term" value="F:protein folding chaperone"/>
    <property type="evidence" value="ECO:0007669"/>
    <property type="project" value="InterPro"/>
</dbReference>
<dbReference type="GO" id="GO:0051087">
    <property type="term" value="F:protein-folding chaperone binding"/>
    <property type="evidence" value="ECO:0007669"/>
    <property type="project" value="TreeGrafter"/>
</dbReference>
<dbReference type="GO" id="GO:0051082">
    <property type="term" value="F:unfolded protein binding"/>
    <property type="evidence" value="ECO:0007669"/>
    <property type="project" value="TreeGrafter"/>
</dbReference>
<dbReference type="GO" id="GO:0051085">
    <property type="term" value="P:chaperone cofactor-dependent protein refolding"/>
    <property type="evidence" value="ECO:0007669"/>
    <property type="project" value="TreeGrafter"/>
</dbReference>
<dbReference type="CDD" id="cd00320">
    <property type="entry name" value="cpn10"/>
    <property type="match status" value="1"/>
</dbReference>
<dbReference type="FunFam" id="2.30.33.40:FF:000001">
    <property type="entry name" value="10 kDa chaperonin"/>
    <property type="match status" value="1"/>
</dbReference>
<dbReference type="Gene3D" id="2.30.33.40">
    <property type="entry name" value="GroES chaperonin"/>
    <property type="match status" value="1"/>
</dbReference>
<dbReference type="HAMAP" id="MF_00580">
    <property type="entry name" value="CH10"/>
    <property type="match status" value="1"/>
</dbReference>
<dbReference type="InterPro" id="IPR020818">
    <property type="entry name" value="Chaperonin_GroES"/>
</dbReference>
<dbReference type="InterPro" id="IPR037124">
    <property type="entry name" value="Chaperonin_GroES_sf"/>
</dbReference>
<dbReference type="InterPro" id="IPR018369">
    <property type="entry name" value="Chaprnonin_Cpn10_CS"/>
</dbReference>
<dbReference type="InterPro" id="IPR011032">
    <property type="entry name" value="GroES-like_sf"/>
</dbReference>
<dbReference type="NCBIfam" id="NF001530">
    <property type="entry name" value="PRK00364.1-6"/>
    <property type="match status" value="1"/>
</dbReference>
<dbReference type="NCBIfam" id="NF001531">
    <property type="entry name" value="PRK00364.2-2"/>
    <property type="match status" value="1"/>
</dbReference>
<dbReference type="NCBIfam" id="NF001533">
    <property type="entry name" value="PRK00364.2-4"/>
    <property type="match status" value="1"/>
</dbReference>
<dbReference type="NCBIfam" id="NF001534">
    <property type="entry name" value="PRK00364.2-5"/>
    <property type="match status" value="1"/>
</dbReference>
<dbReference type="PANTHER" id="PTHR10772">
    <property type="entry name" value="10 KDA HEAT SHOCK PROTEIN"/>
    <property type="match status" value="1"/>
</dbReference>
<dbReference type="PANTHER" id="PTHR10772:SF58">
    <property type="entry name" value="CO-CHAPERONIN GROES"/>
    <property type="match status" value="1"/>
</dbReference>
<dbReference type="Pfam" id="PF00166">
    <property type="entry name" value="Cpn10"/>
    <property type="match status" value="1"/>
</dbReference>
<dbReference type="PRINTS" id="PR00297">
    <property type="entry name" value="CHAPERONIN10"/>
</dbReference>
<dbReference type="SMART" id="SM00883">
    <property type="entry name" value="Cpn10"/>
    <property type="match status" value="1"/>
</dbReference>
<dbReference type="SUPFAM" id="SSF50129">
    <property type="entry name" value="GroES-like"/>
    <property type="match status" value="1"/>
</dbReference>
<dbReference type="PROSITE" id="PS00681">
    <property type="entry name" value="CHAPERONINS_CPN10"/>
    <property type="match status" value="1"/>
</dbReference>
<feature type="chain" id="PRO_1000025296" description="Co-chaperonin GroES">
    <location>
        <begin position="1"/>
        <end position="94"/>
    </location>
</feature>
<protein>
    <recommendedName>
        <fullName evidence="1">Co-chaperonin GroES</fullName>
    </recommendedName>
    <alternativeName>
        <fullName evidence="1">10 kDa chaperonin</fullName>
    </alternativeName>
    <alternativeName>
        <fullName evidence="1">Chaperonin-10</fullName>
        <shortName evidence="1">Cpn10</shortName>
    </alternativeName>
</protein>
<sequence length="94" mass="10078">MLKPLGDRVVIEVLEAEEKTASGIVLPDSAKEKPQSGKIVAVGSGRVLENGTKEPLEVAEGDTVIFAKYSGTEVTYEGTDYLILRESDILAITK</sequence>
<proteinExistence type="inferred from homology"/>
<organism>
    <name type="scientific">Listeria welshimeri serovar 6b (strain ATCC 35897 / DSM 20650 / CCUG 15529 / CIP 8149 / NCTC 11857 / SLCC 5334 / V8)</name>
    <dbReference type="NCBI Taxonomy" id="386043"/>
    <lineage>
        <taxon>Bacteria</taxon>
        <taxon>Bacillati</taxon>
        <taxon>Bacillota</taxon>
        <taxon>Bacilli</taxon>
        <taxon>Bacillales</taxon>
        <taxon>Listeriaceae</taxon>
        <taxon>Listeria</taxon>
    </lineage>
</organism>
<keyword id="KW-0143">Chaperone</keyword>
<keyword id="KW-0963">Cytoplasm</keyword>
<reference key="1">
    <citation type="journal article" date="2006" name="J. Bacteriol.">
        <title>Whole-genome sequence of Listeria welshimeri reveals common steps in genome reduction with Listeria innocua as compared to Listeria monocytogenes.</title>
        <authorList>
            <person name="Hain T."/>
            <person name="Steinweg C."/>
            <person name="Kuenne C.T."/>
            <person name="Billion A."/>
            <person name="Ghai R."/>
            <person name="Chatterjee S.S."/>
            <person name="Domann E."/>
            <person name="Kaerst U."/>
            <person name="Goesmann A."/>
            <person name="Bekel T."/>
            <person name="Bartels D."/>
            <person name="Kaiser O."/>
            <person name="Meyer F."/>
            <person name="Puehler A."/>
            <person name="Weisshaar B."/>
            <person name="Wehland J."/>
            <person name="Liang C."/>
            <person name="Dandekar T."/>
            <person name="Lampidis R."/>
            <person name="Kreft J."/>
            <person name="Goebel W."/>
            <person name="Chakraborty T."/>
        </authorList>
    </citation>
    <scope>NUCLEOTIDE SEQUENCE [LARGE SCALE GENOMIC DNA]</scope>
    <source>
        <strain>ATCC 35897 / DSM 20650 / CCUG 15529 / CIP 8149 / NCTC 11857 / SLCC 5334 / V8</strain>
    </source>
</reference>
<evidence type="ECO:0000255" key="1">
    <source>
        <dbReference type="HAMAP-Rule" id="MF_00580"/>
    </source>
</evidence>
<accession>A0AKH6</accession>
<gene>
    <name evidence="1" type="primary">groES</name>
    <name evidence="1" type="synonym">groS</name>
    <name type="ordered locus">lwe2090</name>
</gene>
<name>CH10_LISW6</name>